<proteinExistence type="inferred from homology"/>
<comment type="similarity">
    <text evidence="2">Belongs to the TCP11 family.</text>
</comment>
<comment type="sequence caution" evidence="2">
    <conflict type="erroneous gene model prediction">
        <sequence resource="EMBL-CDS" id="CAI40395"/>
    </conflict>
</comment>
<comment type="sequence caution" evidence="2">
    <conflict type="erroneous initiation">
        <sequence resource="EMBL-CDS" id="CAI41980"/>
    </conflict>
    <text>Truncated N-terminus.</text>
</comment>
<feature type="chain" id="PRO_0000424012" description="T-complex protein 11-like X-linked protein 2">
    <location>
        <begin position="1"/>
        <end position="502"/>
    </location>
</feature>
<feature type="region of interest" description="Disordered" evidence="1">
    <location>
        <begin position="1"/>
        <end position="36"/>
    </location>
</feature>
<gene>
    <name evidence="3" type="primary">TCP11X2</name>
</gene>
<name>T11X2_HUMAN</name>
<evidence type="ECO:0000256" key="1">
    <source>
        <dbReference type="SAM" id="MobiDB-lite"/>
    </source>
</evidence>
<evidence type="ECO:0000305" key="2"/>
<evidence type="ECO:0000312" key="3">
    <source>
        <dbReference type="HGNC" id="HGNC:48335"/>
    </source>
</evidence>
<organism>
    <name type="scientific">Homo sapiens</name>
    <name type="common">Human</name>
    <dbReference type="NCBI Taxonomy" id="9606"/>
    <lineage>
        <taxon>Eukaryota</taxon>
        <taxon>Metazoa</taxon>
        <taxon>Chordata</taxon>
        <taxon>Craniata</taxon>
        <taxon>Vertebrata</taxon>
        <taxon>Euteleostomi</taxon>
        <taxon>Mammalia</taxon>
        <taxon>Eutheria</taxon>
        <taxon>Euarchontoglires</taxon>
        <taxon>Primates</taxon>
        <taxon>Haplorrhini</taxon>
        <taxon>Catarrhini</taxon>
        <taxon>Hominidae</taxon>
        <taxon>Homo</taxon>
    </lineage>
</organism>
<protein>
    <recommendedName>
        <fullName evidence="2">T-complex protein 11-like X-linked protein 2</fullName>
    </recommendedName>
</protein>
<accession>Q5H9J9</accession>
<accession>A0A2R8YGI6</accession>
<sequence>MPKTEETVLQNDPSVAENGAPEPKTPGQSQKSKSFCLDDQSPDLIETVNEVSKLSISHEIVVNQDFYVEETILPPNSVEGRFAEAMYNAFWNHLKEQLLSTPPDFTCALELLKDVKETLLSLLLPWQNRLRNEIEEALDTDLLKQEAEHGALDVPHLSNYILNLMALLCAPVRDEAIQKLETIRDPVQLLRGILRVLGLMKMDMVNYTIQSFRPYLQEHSIQYEQAKFQELLDKQPSLLDYTTKWLTKAATDITTLCPSSPDSPSSSCSMACSLPSGAGNNSEPPSPTMVLYQGYLNLLLWDLENVEFPETLLMDRIRLQELAFQLHQLTVLASVLLVARSFSGEVLFRSPEFVDRLKCTTKALTEEFISRPEETMLSVSEQVSQEVHQGLKDMGLTTLSSENTASLLGQLQNITKKENCIRSIVDQWIRFFLKCCLLHGMQESLLHFPGGLILIEKELAELGWKFLNLMHHNQQVFGPYYAEILKHIIHPAQAQETDVEPN</sequence>
<reference key="1">
    <citation type="journal article" date="2005" name="Nature">
        <title>The DNA sequence of the human X chromosome.</title>
        <authorList>
            <person name="Ross M.T."/>
            <person name="Grafham D.V."/>
            <person name="Coffey A.J."/>
            <person name="Scherer S."/>
            <person name="McLay K."/>
            <person name="Muzny D."/>
            <person name="Platzer M."/>
            <person name="Howell G.R."/>
            <person name="Burrows C."/>
            <person name="Bird C.P."/>
            <person name="Frankish A."/>
            <person name="Lovell F.L."/>
            <person name="Howe K.L."/>
            <person name="Ashurst J.L."/>
            <person name="Fulton R.S."/>
            <person name="Sudbrak R."/>
            <person name="Wen G."/>
            <person name="Jones M.C."/>
            <person name="Hurles M.E."/>
            <person name="Andrews T.D."/>
            <person name="Scott C.E."/>
            <person name="Searle S."/>
            <person name="Ramser J."/>
            <person name="Whittaker A."/>
            <person name="Deadman R."/>
            <person name="Carter N.P."/>
            <person name="Hunt S.E."/>
            <person name="Chen R."/>
            <person name="Cree A."/>
            <person name="Gunaratne P."/>
            <person name="Havlak P."/>
            <person name="Hodgson A."/>
            <person name="Metzker M.L."/>
            <person name="Richards S."/>
            <person name="Scott G."/>
            <person name="Steffen D."/>
            <person name="Sodergren E."/>
            <person name="Wheeler D.A."/>
            <person name="Worley K.C."/>
            <person name="Ainscough R."/>
            <person name="Ambrose K.D."/>
            <person name="Ansari-Lari M.A."/>
            <person name="Aradhya S."/>
            <person name="Ashwell R.I."/>
            <person name="Babbage A.K."/>
            <person name="Bagguley C.L."/>
            <person name="Ballabio A."/>
            <person name="Banerjee R."/>
            <person name="Barker G.E."/>
            <person name="Barlow K.F."/>
            <person name="Barrett I.P."/>
            <person name="Bates K.N."/>
            <person name="Beare D.M."/>
            <person name="Beasley H."/>
            <person name="Beasley O."/>
            <person name="Beck A."/>
            <person name="Bethel G."/>
            <person name="Blechschmidt K."/>
            <person name="Brady N."/>
            <person name="Bray-Allen S."/>
            <person name="Bridgeman A.M."/>
            <person name="Brown A.J."/>
            <person name="Brown M.J."/>
            <person name="Bonnin D."/>
            <person name="Bruford E.A."/>
            <person name="Buhay C."/>
            <person name="Burch P."/>
            <person name="Burford D."/>
            <person name="Burgess J."/>
            <person name="Burrill W."/>
            <person name="Burton J."/>
            <person name="Bye J.M."/>
            <person name="Carder C."/>
            <person name="Carrel L."/>
            <person name="Chako J."/>
            <person name="Chapman J.C."/>
            <person name="Chavez D."/>
            <person name="Chen E."/>
            <person name="Chen G."/>
            <person name="Chen Y."/>
            <person name="Chen Z."/>
            <person name="Chinault C."/>
            <person name="Ciccodicola A."/>
            <person name="Clark S.Y."/>
            <person name="Clarke G."/>
            <person name="Clee C.M."/>
            <person name="Clegg S."/>
            <person name="Clerc-Blankenburg K."/>
            <person name="Clifford K."/>
            <person name="Cobley V."/>
            <person name="Cole C.G."/>
            <person name="Conquer J.S."/>
            <person name="Corby N."/>
            <person name="Connor R.E."/>
            <person name="David R."/>
            <person name="Davies J."/>
            <person name="Davis C."/>
            <person name="Davis J."/>
            <person name="Delgado O."/>
            <person name="Deshazo D."/>
            <person name="Dhami P."/>
            <person name="Ding Y."/>
            <person name="Dinh H."/>
            <person name="Dodsworth S."/>
            <person name="Draper H."/>
            <person name="Dugan-Rocha S."/>
            <person name="Dunham A."/>
            <person name="Dunn M."/>
            <person name="Durbin K.J."/>
            <person name="Dutta I."/>
            <person name="Eades T."/>
            <person name="Ellwood M."/>
            <person name="Emery-Cohen A."/>
            <person name="Errington H."/>
            <person name="Evans K.L."/>
            <person name="Faulkner L."/>
            <person name="Francis F."/>
            <person name="Frankland J."/>
            <person name="Fraser A.E."/>
            <person name="Galgoczy P."/>
            <person name="Gilbert J."/>
            <person name="Gill R."/>
            <person name="Gloeckner G."/>
            <person name="Gregory S.G."/>
            <person name="Gribble S."/>
            <person name="Griffiths C."/>
            <person name="Grocock R."/>
            <person name="Gu Y."/>
            <person name="Gwilliam R."/>
            <person name="Hamilton C."/>
            <person name="Hart E.A."/>
            <person name="Hawes A."/>
            <person name="Heath P.D."/>
            <person name="Heitmann K."/>
            <person name="Hennig S."/>
            <person name="Hernandez J."/>
            <person name="Hinzmann B."/>
            <person name="Ho S."/>
            <person name="Hoffs M."/>
            <person name="Howden P.J."/>
            <person name="Huckle E.J."/>
            <person name="Hume J."/>
            <person name="Hunt P.J."/>
            <person name="Hunt A.R."/>
            <person name="Isherwood J."/>
            <person name="Jacob L."/>
            <person name="Johnson D."/>
            <person name="Jones S."/>
            <person name="de Jong P.J."/>
            <person name="Joseph S.S."/>
            <person name="Keenan S."/>
            <person name="Kelly S."/>
            <person name="Kershaw J.K."/>
            <person name="Khan Z."/>
            <person name="Kioschis P."/>
            <person name="Klages S."/>
            <person name="Knights A.J."/>
            <person name="Kosiura A."/>
            <person name="Kovar-Smith C."/>
            <person name="Laird G.K."/>
            <person name="Langford C."/>
            <person name="Lawlor S."/>
            <person name="Leversha M."/>
            <person name="Lewis L."/>
            <person name="Liu W."/>
            <person name="Lloyd C."/>
            <person name="Lloyd D.M."/>
            <person name="Loulseged H."/>
            <person name="Loveland J.E."/>
            <person name="Lovell J.D."/>
            <person name="Lozado R."/>
            <person name="Lu J."/>
            <person name="Lyne R."/>
            <person name="Ma J."/>
            <person name="Maheshwari M."/>
            <person name="Matthews L.H."/>
            <person name="McDowall J."/>
            <person name="McLaren S."/>
            <person name="McMurray A."/>
            <person name="Meidl P."/>
            <person name="Meitinger T."/>
            <person name="Milne S."/>
            <person name="Miner G."/>
            <person name="Mistry S.L."/>
            <person name="Morgan M."/>
            <person name="Morris S."/>
            <person name="Mueller I."/>
            <person name="Mullikin J.C."/>
            <person name="Nguyen N."/>
            <person name="Nordsiek G."/>
            <person name="Nyakatura G."/>
            <person name="O'dell C.N."/>
            <person name="Okwuonu G."/>
            <person name="Palmer S."/>
            <person name="Pandian R."/>
            <person name="Parker D."/>
            <person name="Parrish J."/>
            <person name="Pasternak S."/>
            <person name="Patel D."/>
            <person name="Pearce A.V."/>
            <person name="Pearson D.M."/>
            <person name="Pelan S.E."/>
            <person name="Perez L."/>
            <person name="Porter K.M."/>
            <person name="Ramsey Y."/>
            <person name="Reichwald K."/>
            <person name="Rhodes S."/>
            <person name="Ridler K.A."/>
            <person name="Schlessinger D."/>
            <person name="Schueler M.G."/>
            <person name="Sehra H.K."/>
            <person name="Shaw-Smith C."/>
            <person name="Shen H."/>
            <person name="Sheridan E.M."/>
            <person name="Shownkeen R."/>
            <person name="Skuce C.D."/>
            <person name="Smith M.L."/>
            <person name="Sotheran E.C."/>
            <person name="Steingruber H.E."/>
            <person name="Steward C.A."/>
            <person name="Storey R."/>
            <person name="Swann R.M."/>
            <person name="Swarbreck D."/>
            <person name="Tabor P.E."/>
            <person name="Taudien S."/>
            <person name="Taylor T."/>
            <person name="Teague B."/>
            <person name="Thomas K."/>
            <person name="Thorpe A."/>
            <person name="Timms K."/>
            <person name="Tracey A."/>
            <person name="Trevanion S."/>
            <person name="Tromans A.C."/>
            <person name="d'Urso M."/>
            <person name="Verduzco D."/>
            <person name="Villasana D."/>
            <person name="Waldron L."/>
            <person name="Wall M."/>
            <person name="Wang Q."/>
            <person name="Warren J."/>
            <person name="Warry G.L."/>
            <person name="Wei X."/>
            <person name="West A."/>
            <person name="Whitehead S.L."/>
            <person name="Whiteley M.N."/>
            <person name="Wilkinson J.E."/>
            <person name="Willey D.L."/>
            <person name="Williams G."/>
            <person name="Williams L."/>
            <person name="Williamson A."/>
            <person name="Williamson H."/>
            <person name="Wilming L."/>
            <person name="Woodmansey R.L."/>
            <person name="Wray P.W."/>
            <person name="Yen J."/>
            <person name="Zhang J."/>
            <person name="Zhou J."/>
            <person name="Zoghbi H."/>
            <person name="Zorilla S."/>
            <person name="Buck D."/>
            <person name="Reinhardt R."/>
            <person name="Poustka A."/>
            <person name="Rosenthal A."/>
            <person name="Lehrach H."/>
            <person name="Meindl A."/>
            <person name="Minx P.J."/>
            <person name="Hillier L.W."/>
            <person name="Willard H.F."/>
            <person name="Wilson R.K."/>
            <person name="Waterston R.H."/>
            <person name="Rice C.M."/>
            <person name="Vaudin M."/>
            <person name="Coulson A."/>
            <person name="Nelson D.L."/>
            <person name="Weinstock G."/>
            <person name="Sulston J.E."/>
            <person name="Durbin R.M."/>
            <person name="Hubbard T."/>
            <person name="Gibbs R.A."/>
            <person name="Beck S."/>
            <person name="Rogers J."/>
            <person name="Bentley D.R."/>
        </authorList>
    </citation>
    <scope>NUCLEOTIDE SEQUENCE [LARGE SCALE GENOMIC DNA]</scope>
</reference>
<reference key="2">
    <citation type="submission" date="2005-09" db="EMBL/GenBank/DDBJ databases">
        <authorList>
            <person name="Mural R.J."/>
            <person name="Istrail S."/>
            <person name="Sutton G.G."/>
            <person name="Florea L."/>
            <person name="Halpern A.L."/>
            <person name="Mobarry C.M."/>
            <person name="Lippert R."/>
            <person name="Walenz B."/>
            <person name="Shatkay H."/>
            <person name="Dew I."/>
            <person name="Miller J.R."/>
            <person name="Flanigan M.J."/>
            <person name="Edwards N.J."/>
            <person name="Bolanos R."/>
            <person name="Fasulo D."/>
            <person name="Halldorsson B.V."/>
            <person name="Hannenhalli S."/>
            <person name="Turner R."/>
            <person name="Yooseph S."/>
            <person name="Lu F."/>
            <person name="Nusskern D.R."/>
            <person name="Shue B.C."/>
            <person name="Zheng X.H."/>
            <person name="Zhong F."/>
            <person name="Delcher A.L."/>
            <person name="Huson D.H."/>
            <person name="Kravitz S.A."/>
            <person name="Mouchard L."/>
            <person name="Reinert K."/>
            <person name="Remington K.A."/>
            <person name="Clark A.G."/>
            <person name="Waterman M.S."/>
            <person name="Eichler E.E."/>
            <person name="Adams M.D."/>
            <person name="Hunkapiller M.W."/>
            <person name="Myers E.W."/>
            <person name="Venter J.C."/>
        </authorList>
    </citation>
    <scope>NUCLEOTIDE SEQUENCE [LARGE SCALE GENOMIC DNA]</scope>
</reference>
<keyword id="KW-1185">Reference proteome</keyword>
<dbReference type="EMBL" id="AC235565">
    <property type="status" value="NOT_ANNOTATED_CDS"/>
    <property type="molecule type" value="Genomic_DNA"/>
</dbReference>
<dbReference type="EMBL" id="AL590069">
    <property type="protein sequence ID" value="CAI40395.1"/>
    <property type="status" value="ALT_SEQ"/>
    <property type="molecule type" value="Genomic_DNA"/>
</dbReference>
<dbReference type="EMBL" id="Z70689">
    <property type="protein sequence ID" value="CAI41980.1"/>
    <property type="status" value="ALT_INIT"/>
    <property type="molecule type" value="Genomic_DNA"/>
</dbReference>
<dbReference type="EMBL" id="CH471190">
    <property type="protein sequence ID" value="EAW54743.1"/>
    <property type="molecule type" value="Genomic_DNA"/>
</dbReference>
<dbReference type="RefSeq" id="NP_001264352.1">
    <property type="nucleotide sequence ID" value="NM_001277423.1"/>
</dbReference>
<dbReference type="RefSeq" id="NP_001391956.1">
    <property type="nucleotide sequence ID" value="NM_001405027.1"/>
</dbReference>
<dbReference type="BioGRID" id="3190525">
    <property type="interactions" value="3"/>
</dbReference>
<dbReference type="FunCoup" id="Q5H9J9">
    <property type="interactions" value="6"/>
</dbReference>
<dbReference type="STRING" id="9606.ENSP00000392879"/>
<dbReference type="GlyGen" id="Q5H9J9">
    <property type="glycosylation" value="1 site"/>
</dbReference>
<dbReference type="PhosphoSitePlus" id="Q5H9J9"/>
<dbReference type="BioMuta" id="TCP11X2"/>
<dbReference type="DMDM" id="74755458"/>
<dbReference type="PaxDb" id="9606-ENSP00000392879"/>
<dbReference type="Antibodypedia" id="65822">
    <property type="antibodies" value="1 antibodies from 1 providers"/>
</dbReference>
<dbReference type="DNASU" id="100996648"/>
<dbReference type="Ensembl" id="ENST00000642911.3">
    <property type="protein sequence ID" value="ENSP00000496057.1"/>
    <property type="gene ID" value="ENSG00000215029.12"/>
</dbReference>
<dbReference type="GeneID" id="100996648"/>
<dbReference type="KEGG" id="hsa:100996648"/>
<dbReference type="MANE-Select" id="ENST00000642911.3">
    <property type="protein sequence ID" value="ENSP00000496057.1"/>
    <property type="RefSeq nucleotide sequence ID" value="NM_001405027.1"/>
    <property type="RefSeq protein sequence ID" value="NP_001391956.1"/>
</dbReference>
<dbReference type="UCSC" id="uc004ejd.1">
    <property type="organism name" value="human"/>
</dbReference>
<dbReference type="AGR" id="HGNC:48335"/>
<dbReference type="CTD" id="100996648"/>
<dbReference type="GeneCards" id="TCP11X2"/>
<dbReference type="HGNC" id="HGNC:48335">
    <property type="gene designation" value="TCP11X2"/>
</dbReference>
<dbReference type="neXtProt" id="NX_Q5H9J9"/>
<dbReference type="VEuPathDB" id="HostDB:ENSG00000215029"/>
<dbReference type="eggNOG" id="KOG1981">
    <property type="taxonomic scope" value="Eukaryota"/>
</dbReference>
<dbReference type="GeneTree" id="ENSGT00940000160792"/>
<dbReference type="HOGENOM" id="CLU_026469_0_0_1"/>
<dbReference type="InParanoid" id="Q5H9J9"/>
<dbReference type="OMA" id="FMETMYN"/>
<dbReference type="OrthoDB" id="276323at2759"/>
<dbReference type="PAN-GO" id="Q5H9J9">
    <property type="GO annotations" value="4 GO annotations based on evolutionary models"/>
</dbReference>
<dbReference type="PhylomeDB" id="Q5H9J9"/>
<dbReference type="TreeFam" id="TF313385"/>
<dbReference type="BioGRID-ORCS" id="100996648">
    <property type="hits" value="37 hits in 646 CRISPR screens"/>
</dbReference>
<dbReference type="GenomeRNAi" id="100996648"/>
<dbReference type="Pharos" id="Q5H9J9">
    <property type="development level" value="Tdark"/>
</dbReference>
<dbReference type="PRO" id="PR:Q5H9J9"/>
<dbReference type="Proteomes" id="UP000005640">
    <property type="component" value="Chromosome X"/>
</dbReference>
<dbReference type="RNAct" id="Q5H9J9">
    <property type="molecule type" value="protein"/>
</dbReference>
<dbReference type="Bgee" id="ENSG00000215029">
    <property type="expression patterns" value="Expressed in male germ line stem cell (sensu Vertebrata) in testis and 48 other cell types or tissues"/>
</dbReference>
<dbReference type="GO" id="GO:0001669">
    <property type="term" value="C:acrosomal vesicle"/>
    <property type="evidence" value="ECO:0000318"/>
    <property type="project" value="GO_Central"/>
</dbReference>
<dbReference type="GO" id="GO:0036126">
    <property type="term" value="C:sperm flagellum"/>
    <property type="evidence" value="ECO:0000318"/>
    <property type="project" value="GO_Central"/>
</dbReference>
<dbReference type="GO" id="GO:0010737">
    <property type="term" value="P:protein kinase A signaling"/>
    <property type="evidence" value="ECO:0000318"/>
    <property type="project" value="GO_Central"/>
</dbReference>
<dbReference type="GO" id="GO:1902490">
    <property type="term" value="P:regulation of sperm capacitation"/>
    <property type="evidence" value="ECO:0000318"/>
    <property type="project" value="GO_Central"/>
</dbReference>
<dbReference type="InterPro" id="IPR008862">
    <property type="entry name" value="Tcp11"/>
</dbReference>
<dbReference type="PANTHER" id="PTHR12832:SF21">
    <property type="entry name" value="T-COMPLEX PROTEIN 11 X-LINKED PROTEIN 1-RELATED"/>
    <property type="match status" value="1"/>
</dbReference>
<dbReference type="PANTHER" id="PTHR12832">
    <property type="entry name" value="TESTIS-SPECIFIC PROTEIN PBS13 T-COMPLEX 11"/>
    <property type="match status" value="1"/>
</dbReference>
<dbReference type="Pfam" id="PF05794">
    <property type="entry name" value="Tcp11"/>
    <property type="match status" value="1"/>
</dbReference>